<organism>
    <name type="scientific">Homo sapiens</name>
    <name type="common">Human</name>
    <dbReference type="NCBI Taxonomy" id="9606"/>
    <lineage>
        <taxon>Eukaryota</taxon>
        <taxon>Metazoa</taxon>
        <taxon>Chordata</taxon>
        <taxon>Craniata</taxon>
        <taxon>Vertebrata</taxon>
        <taxon>Euteleostomi</taxon>
        <taxon>Mammalia</taxon>
        <taxon>Eutheria</taxon>
        <taxon>Euarchontoglires</taxon>
        <taxon>Primates</taxon>
        <taxon>Haplorrhini</taxon>
        <taxon>Catarrhini</taxon>
        <taxon>Hominidae</taxon>
        <taxon>Homo</taxon>
    </lineage>
</organism>
<comment type="function">
    <text evidence="3 7 8 9 10 11">E3 ubiquitin-protein ligase which, in association with ADP-ribosyltransferase PARP9, plays a role in DNA damage repair and in interferon-mediated antiviral responses (PubMed:12670957, PubMed:19818714, PubMed:23230272, PubMed:26479788). Monoubiquitinates several histones, including histone H2A, H2B, H3 and H4 (PubMed:28525742). In response to DNA damage, mediates monoubiquitination of 'Lys-91' of histone H4 (H4K91ub1) (PubMed:19818714). The exact role of H4K91ub1 in DNA damage response is still unclear but it may function as a licensing signal for additional histone H4 post-translational modifications such as H4 'Lys-20' methylation (H4K20me) (PubMed:19818714). PARP1-dependent PARP9-DTX3L-mediated ubiquitination promotes the rapid and specific recruitment of 53BP1/TP53BP1, UIMC1/RAP80, and BRCA1 to DNA damage sites (PubMed:23230272). By monoubiquitinating histone H2B H2BC9/H2BJ and thereby promoting chromatin remodeling, positively regulates STAT1-dependent interferon-stimulated gene transcription and thus STAT1-mediated control of viral replication (PubMed:26479788). Independently of its catalytic activity, promotes the sorting of chemokine receptor CXCR4 from early endosome to lysosome following CXCL12 stimulation by reducing E3 ligase ITCH activity and thus ITCH-mediated ubiquitination of endosomal sorting complex required for transport ESCRT-0 components HGS and STAM (PubMed:24790097). In addition, required for the recruitment of HGS and STAM to early endosomes (PubMed:24790097). In association with PARP9, plays a role in antiviral responses by mediating 'Lys-48'-linked ubiquitination of encephalomyocarditis virus (EMCV) and human rhinovirus (HRV) C3 proteases and thus promoting their proteasomal-mediated degradation (PubMed:26479788).</text>
</comment>
<comment type="catalytic activity">
    <reaction evidence="3 7 9 10 11">
        <text>S-ubiquitinyl-[E2 ubiquitin-conjugating enzyme]-L-cysteine + [acceptor protein]-L-lysine = [E2 ubiquitin-conjugating enzyme]-L-cysteine + N(6)-ubiquitinyl-[acceptor protein]-L-lysine.</text>
        <dbReference type="EC" id="2.3.2.27"/>
    </reaction>
</comment>
<comment type="activity regulation">
    <text evidence="11">Binding to PARP9 enhances DTX3L catalytic activity.</text>
</comment>
<comment type="pathway">
    <text evidence="3 7 9 10 11">Protein modification; protein ubiquitination.</text>
</comment>
<comment type="subunit">
    <text evidence="3 8 9 10 11">Homodimer and heterodimer (PubMed:12670957, PubMed:28525742). Can heterodimerize with DTX1, enhancing its ubiquitin ligase activity in vitro (PubMed:12670957). Interacts (via N-terminus) with ADP ribosyltransferase PARP9/BAL1 (via PARP catalytic domain) forming a stable complex; the interaction is required to activate PARP9 but is dispensable for DTX3L catalytic activity (PubMed:12670957, PubMed:23230272, PubMed:26479788, PubMed:28525742). Forms a complex with STAT1 and PARP9 independently of IFNB1 or IFNG-mediated STAT1 'Tyr-701' phosphorylation (PubMed:26479788). Found in a complex with PARP9, STAT1 and H2BC9 (PubMed:26479788). Found in a complex with E3 ligase ITCH and ESCRT-0 components HGS and STAM (PubMed:24790097). Interacts (via C-terminus) with ITCH; the interaction is increased upon CXCL12 stimulation and inhibits ITCH catalytic activity; the interaction is direct (PubMed:24790097). Interacts with HGS and STAM; the interaction brings together HGS and STAM and promotes their recruitment to early endosomes (PubMed:24790097).</text>
</comment>
<comment type="subunit">
    <text evidence="10">(Microbial infection) Interacts with encephalomyocarditis virus (EMCV) C3 protease; the interaction results in C3 protease 'Lys-48'-linked ubiquitination.</text>
</comment>
<comment type="subunit">
    <text evidence="10">(Microbial infection) Interacts with human rhinovirus (HRV) C3 protease; the interaction results in C3 protease 'Lys-48'-linked ubiquitination.</text>
</comment>
<comment type="interaction">
    <interactant intactId="EBI-2340392">
        <id>Q8TDB6</id>
    </interactant>
    <interactant intactId="EBI-742688">
        <id>Q9NZD8</id>
        <label>SPG21</label>
    </interactant>
    <organismsDiffer>false</organismsDiffer>
    <experiments>10</experiments>
</comment>
<comment type="interaction">
    <interactant intactId="EBI-2340392">
        <id>Q8TDB6</id>
    </interactant>
    <interactant intactId="EBI-473850">
        <id>P61086</id>
        <label>UBE2K</label>
    </interactant>
    <organismsDiffer>false</organismsDiffer>
    <experiments>3</experiments>
</comment>
<comment type="subcellular location">
    <subcellularLocation>
        <location evidence="8 9 10">Cytoplasm</location>
    </subcellularLocation>
    <subcellularLocation>
        <location evidence="8 10">Nucleus</location>
    </subcellularLocation>
    <subcellularLocation>
        <location evidence="9">Early endosome membrane</location>
        <topology evidence="15">Peripheral membrane protein</topology>
        <orientation evidence="15">Cytoplasmic side</orientation>
    </subcellularLocation>
    <subcellularLocation>
        <location evidence="9">Lysosome membrane</location>
        <topology evidence="15">Peripheral membrane protein</topology>
        <orientation evidence="15">Cytoplasmic side</orientation>
    </subcellularLocation>
    <text evidence="8 9 10">Translocates to the nucleus in response to IFNG or IFNB1 stimulation (PubMed:26479788). Localizes at sites of DNA damage in a PARP1-dependent manner (PubMed:23230272). Localization to early endosomes is increased upon CXCL12 stimulation where it co-localizes with ITCH, CXCL4, HGS and STAM (PubMed:24790097). A minor proportion localizes to lysosomes (PubMed:24790097).</text>
</comment>
<comment type="alternative products">
    <event type="alternative splicing"/>
    <isoform>
        <id>Q8TDB6-1</id>
        <name>1</name>
        <sequence type="displayed"/>
    </isoform>
    <isoform>
        <id>Q8TDB6-2</id>
        <name>2</name>
        <sequence type="described" ref="VSP_038522"/>
    </isoform>
</comment>
<comment type="induction">
    <text evidence="5 10">Induced by IFNG (PubMed:16809771, PubMed:26479788). Induced by IFNB1 (PubMed:26479788).</text>
</comment>
<comment type="PTM">
    <text evidence="9">Autoubiquitinated.</text>
</comment>
<comment type="similarity">
    <text evidence="14">Belongs to the Deltex family.</text>
</comment>
<dbReference type="EC" id="2.3.2.27" evidence="3 7 9 10 11"/>
<dbReference type="EMBL" id="AY225123">
    <property type="protein sequence ID" value="AAP57517.1"/>
    <property type="molecule type" value="mRNA"/>
</dbReference>
<dbReference type="EMBL" id="AF484416">
    <property type="protein sequence ID" value="AAL90859.1"/>
    <property type="molecule type" value="mRNA"/>
</dbReference>
<dbReference type="EMBL" id="AK125086">
    <property type="protein sequence ID" value="BAG54138.1"/>
    <property type="molecule type" value="mRNA"/>
</dbReference>
<dbReference type="EMBL" id="AY780792">
    <property type="protein sequence ID" value="AAV98362.1"/>
    <property type="molecule type" value="mRNA"/>
</dbReference>
<dbReference type="EMBL" id="CH471052">
    <property type="protein sequence ID" value="EAW79476.1"/>
    <property type="molecule type" value="Genomic_DNA"/>
</dbReference>
<dbReference type="EMBL" id="BC042191">
    <property type="protein sequence ID" value="AAH42191.1"/>
    <property type="molecule type" value="mRNA"/>
</dbReference>
<dbReference type="EMBL" id="BC060509">
    <property type="protein sequence ID" value="AAH60509.1"/>
    <property type="molecule type" value="mRNA"/>
</dbReference>
<dbReference type="CCDS" id="CCDS3015.1">
    <molecule id="Q8TDB6-1"/>
</dbReference>
<dbReference type="RefSeq" id="NP_612144.1">
    <molecule id="Q8TDB6-1"/>
    <property type="nucleotide sequence ID" value="NM_138287.3"/>
</dbReference>
<dbReference type="PDB" id="3PG6">
    <property type="method" value="X-ray"/>
    <property type="resolution" value="1.70 A"/>
    <property type="chains" value="A/B/C/D=601-740"/>
</dbReference>
<dbReference type="PDB" id="8R79">
    <property type="method" value="X-ray"/>
    <property type="resolution" value="2.18 A"/>
    <property type="chains" value="A/B/C/D=126-200"/>
</dbReference>
<dbReference type="PDBsum" id="3PG6"/>
<dbReference type="PDBsum" id="8R79"/>
<dbReference type="SASBDB" id="Q8TDB6"/>
<dbReference type="SMR" id="Q8TDB6"/>
<dbReference type="BioGRID" id="127392">
    <property type="interactions" value="67"/>
</dbReference>
<dbReference type="CORUM" id="Q8TDB6"/>
<dbReference type="FunCoup" id="Q8TDB6">
    <property type="interactions" value="1278"/>
</dbReference>
<dbReference type="IntAct" id="Q8TDB6">
    <property type="interactions" value="25"/>
</dbReference>
<dbReference type="MINT" id="Q8TDB6"/>
<dbReference type="STRING" id="9606.ENSP00000296161"/>
<dbReference type="GlyCosmos" id="Q8TDB6">
    <property type="glycosylation" value="1 site, 1 glycan"/>
</dbReference>
<dbReference type="GlyGen" id="Q8TDB6">
    <property type="glycosylation" value="4 sites, 1 O-linked glycan (4 sites)"/>
</dbReference>
<dbReference type="iPTMnet" id="Q8TDB6"/>
<dbReference type="PhosphoSitePlus" id="Q8TDB6"/>
<dbReference type="BioMuta" id="DTX3L"/>
<dbReference type="DMDM" id="37077418"/>
<dbReference type="jPOST" id="Q8TDB6"/>
<dbReference type="MassIVE" id="Q8TDB6"/>
<dbReference type="PaxDb" id="9606-ENSP00000296161"/>
<dbReference type="PeptideAtlas" id="Q8TDB6"/>
<dbReference type="ProteomicsDB" id="74256">
    <molecule id="Q8TDB6-1"/>
</dbReference>
<dbReference type="ProteomicsDB" id="74257">
    <molecule id="Q8TDB6-2"/>
</dbReference>
<dbReference type="Pumba" id="Q8TDB6"/>
<dbReference type="Antibodypedia" id="2147">
    <property type="antibodies" value="147 antibodies from 30 providers"/>
</dbReference>
<dbReference type="DNASU" id="151636"/>
<dbReference type="Ensembl" id="ENST00000296161.9">
    <molecule id="Q8TDB6-1"/>
    <property type="protein sequence ID" value="ENSP00000296161.4"/>
    <property type="gene ID" value="ENSG00000163840.10"/>
</dbReference>
<dbReference type="Ensembl" id="ENST00000383661.3">
    <molecule id="Q8TDB6-2"/>
    <property type="protein sequence ID" value="ENSP00000373157.3"/>
    <property type="gene ID" value="ENSG00000163840.10"/>
</dbReference>
<dbReference type="GeneID" id="151636"/>
<dbReference type="KEGG" id="hsa:151636"/>
<dbReference type="MANE-Select" id="ENST00000296161.9">
    <property type="protein sequence ID" value="ENSP00000296161.4"/>
    <property type="RefSeq nucleotide sequence ID" value="NM_138287.3"/>
    <property type="RefSeq protein sequence ID" value="NP_612144.1"/>
</dbReference>
<dbReference type="UCSC" id="uc003efk.4">
    <molecule id="Q8TDB6-1"/>
    <property type="organism name" value="human"/>
</dbReference>
<dbReference type="AGR" id="HGNC:30323"/>
<dbReference type="CTD" id="151636"/>
<dbReference type="DisGeNET" id="151636"/>
<dbReference type="GeneCards" id="DTX3L"/>
<dbReference type="HGNC" id="HGNC:30323">
    <property type="gene designation" value="DTX3L"/>
</dbReference>
<dbReference type="HPA" id="ENSG00000163840">
    <property type="expression patterns" value="Low tissue specificity"/>
</dbReference>
<dbReference type="MIM" id="613143">
    <property type="type" value="gene"/>
</dbReference>
<dbReference type="neXtProt" id="NX_Q8TDB6"/>
<dbReference type="OpenTargets" id="ENSG00000163840"/>
<dbReference type="PharmGKB" id="PA134864792"/>
<dbReference type="VEuPathDB" id="HostDB:ENSG00000163840"/>
<dbReference type="eggNOG" id="ENOG502RGAW">
    <property type="taxonomic scope" value="Eukaryota"/>
</dbReference>
<dbReference type="GeneTree" id="ENSGT00940000154578"/>
<dbReference type="HOGENOM" id="CLU_024295_0_0_1"/>
<dbReference type="InParanoid" id="Q8TDB6"/>
<dbReference type="OMA" id="FKYICPD"/>
<dbReference type="OrthoDB" id="527344at2759"/>
<dbReference type="PAN-GO" id="Q8TDB6">
    <property type="GO annotations" value="4 GO annotations based on evolutionary models"/>
</dbReference>
<dbReference type="PhylomeDB" id="Q8TDB6"/>
<dbReference type="TreeFam" id="TF325526"/>
<dbReference type="PathwayCommons" id="Q8TDB6"/>
<dbReference type="Reactome" id="R-HSA-983168">
    <property type="pathway name" value="Antigen processing: Ubiquitination &amp; Proteasome degradation"/>
</dbReference>
<dbReference type="SABIO-RK" id="Q8TDB6"/>
<dbReference type="SignaLink" id="Q8TDB6"/>
<dbReference type="SIGNOR" id="Q8TDB6"/>
<dbReference type="UniPathway" id="UPA00143"/>
<dbReference type="BioGRID-ORCS" id="151636">
    <property type="hits" value="15 hits in 1208 CRISPR screens"/>
</dbReference>
<dbReference type="CD-CODE" id="DEE660B4">
    <property type="entry name" value="Stress granule"/>
</dbReference>
<dbReference type="ChiTaRS" id="DTX3L">
    <property type="organism name" value="human"/>
</dbReference>
<dbReference type="EvolutionaryTrace" id="Q8TDB6"/>
<dbReference type="GenomeRNAi" id="151636"/>
<dbReference type="Pharos" id="Q8TDB6">
    <property type="development level" value="Tbio"/>
</dbReference>
<dbReference type="PRO" id="PR:Q8TDB6"/>
<dbReference type="Proteomes" id="UP000005640">
    <property type="component" value="Chromosome 3"/>
</dbReference>
<dbReference type="RNAct" id="Q8TDB6">
    <property type="molecule type" value="protein"/>
</dbReference>
<dbReference type="Bgee" id="ENSG00000163840">
    <property type="expression patterns" value="Expressed in ileal mucosa and 192 other cell types or tissues"/>
</dbReference>
<dbReference type="GO" id="GO:0005737">
    <property type="term" value="C:cytoplasm"/>
    <property type="evidence" value="ECO:0000314"/>
    <property type="project" value="UniProtKB"/>
</dbReference>
<dbReference type="GO" id="GO:0005829">
    <property type="term" value="C:cytosol"/>
    <property type="evidence" value="ECO:0000314"/>
    <property type="project" value="HPA"/>
</dbReference>
<dbReference type="GO" id="GO:0031901">
    <property type="term" value="C:early endosome membrane"/>
    <property type="evidence" value="ECO:0007669"/>
    <property type="project" value="UniProtKB-SubCell"/>
</dbReference>
<dbReference type="GO" id="GO:0005765">
    <property type="term" value="C:lysosomal membrane"/>
    <property type="evidence" value="ECO:0007669"/>
    <property type="project" value="UniProtKB-SubCell"/>
</dbReference>
<dbReference type="GO" id="GO:0005764">
    <property type="term" value="C:lysosome"/>
    <property type="evidence" value="ECO:0000314"/>
    <property type="project" value="UniProtKB"/>
</dbReference>
<dbReference type="GO" id="GO:0005654">
    <property type="term" value="C:nucleoplasm"/>
    <property type="evidence" value="ECO:0000314"/>
    <property type="project" value="HPA"/>
</dbReference>
<dbReference type="GO" id="GO:0005634">
    <property type="term" value="C:nucleus"/>
    <property type="evidence" value="ECO:0000314"/>
    <property type="project" value="UniProtKB"/>
</dbReference>
<dbReference type="GO" id="GO:0032991">
    <property type="term" value="C:protein-containing complex"/>
    <property type="evidence" value="ECO:0000314"/>
    <property type="project" value="UniProtKB"/>
</dbReference>
<dbReference type="GO" id="GO:0019899">
    <property type="term" value="F:enzyme binding"/>
    <property type="evidence" value="ECO:0000353"/>
    <property type="project" value="UniProtKB"/>
</dbReference>
<dbReference type="GO" id="GO:0004857">
    <property type="term" value="F:enzyme inhibitor activity"/>
    <property type="evidence" value="ECO:0000315"/>
    <property type="project" value="UniProtKB"/>
</dbReference>
<dbReference type="GO" id="GO:0042393">
    <property type="term" value="F:histone binding"/>
    <property type="evidence" value="ECO:0000314"/>
    <property type="project" value="UniProtKB"/>
</dbReference>
<dbReference type="GO" id="GO:0141000">
    <property type="term" value="F:histone H4K91 ubiquitin ligase activity"/>
    <property type="evidence" value="ECO:0000314"/>
    <property type="project" value="UniProtKB"/>
</dbReference>
<dbReference type="GO" id="GO:0140852">
    <property type="term" value="F:histone ubiquitin ligase activity"/>
    <property type="evidence" value="ECO:0000315"/>
    <property type="project" value="UniProtKB"/>
</dbReference>
<dbReference type="GO" id="GO:0140768">
    <property type="term" value="F:protein ADP-ribosyltransferase-substrate adaptor activity"/>
    <property type="evidence" value="ECO:0000314"/>
    <property type="project" value="UniProtKB"/>
</dbReference>
<dbReference type="GO" id="GO:0097677">
    <property type="term" value="F:STAT family protein binding"/>
    <property type="evidence" value="ECO:0000353"/>
    <property type="project" value="UniProtKB"/>
</dbReference>
<dbReference type="GO" id="GO:0061630">
    <property type="term" value="F:ubiquitin protein ligase activity"/>
    <property type="evidence" value="ECO:0000318"/>
    <property type="project" value="GO_Central"/>
</dbReference>
<dbReference type="GO" id="GO:0044389">
    <property type="term" value="F:ubiquitin-like protein ligase binding"/>
    <property type="evidence" value="ECO:0000353"/>
    <property type="project" value="UniProtKB"/>
</dbReference>
<dbReference type="GO" id="GO:0004842">
    <property type="term" value="F:ubiquitin-protein transferase activity"/>
    <property type="evidence" value="ECO:0000314"/>
    <property type="project" value="UniProtKB"/>
</dbReference>
<dbReference type="GO" id="GO:0008270">
    <property type="term" value="F:zinc ion binding"/>
    <property type="evidence" value="ECO:0007669"/>
    <property type="project" value="UniProtKB-KW"/>
</dbReference>
<dbReference type="GO" id="GO:0051607">
    <property type="term" value="P:defense response to virus"/>
    <property type="evidence" value="ECO:0007669"/>
    <property type="project" value="UniProtKB-KW"/>
</dbReference>
<dbReference type="GO" id="GO:0000077">
    <property type="term" value="P:DNA damage checkpoint signaling"/>
    <property type="evidence" value="ECO:0000315"/>
    <property type="project" value="UniProtKB"/>
</dbReference>
<dbReference type="GO" id="GO:0140861">
    <property type="term" value="P:DNA repair-dependent chromatin remodeling"/>
    <property type="evidence" value="ECO:0000315"/>
    <property type="project" value="UniProtKB"/>
</dbReference>
<dbReference type="GO" id="GO:0006302">
    <property type="term" value="P:double-strand break repair"/>
    <property type="evidence" value="ECO:0000315"/>
    <property type="project" value="UniProtKB"/>
</dbReference>
<dbReference type="GO" id="GO:0008333">
    <property type="term" value="P:endosome to lysosome transport"/>
    <property type="evidence" value="ECO:0000315"/>
    <property type="project" value="UniProtKB"/>
</dbReference>
<dbReference type="GO" id="GO:0045087">
    <property type="term" value="P:innate immune response"/>
    <property type="evidence" value="ECO:0007669"/>
    <property type="project" value="UniProtKB-KW"/>
</dbReference>
<dbReference type="GO" id="GO:0051444">
    <property type="term" value="P:negative regulation of ubiquitin-protein transferase activity"/>
    <property type="evidence" value="ECO:0000315"/>
    <property type="project" value="UniProtKB"/>
</dbReference>
<dbReference type="GO" id="GO:0007219">
    <property type="term" value="P:Notch signaling pathway"/>
    <property type="evidence" value="ECO:0000318"/>
    <property type="project" value="GO_Central"/>
</dbReference>
<dbReference type="GO" id="GO:0035563">
    <property type="term" value="P:positive regulation of chromatin binding"/>
    <property type="evidence" value="ECO:0000316"/>
    <property type="project" value="UniProtKB"/>
</dbReference>
<dbReference type="GO" id="GO:0002230">
    <property type="term" value="P:positive regulation of defense response to virus by host"/>
    <property type="evidence" value="ECO:0000316"/>
    <property type="project" value="UniProtKB"/>
</dbReference>
<dbReference type="GO" id="GO:0045893">
    <property type="term" value="P:positive regulation of DNA-templated transcription"/>
    <property type="evidence" value="ECO:0000316"/>
    <property type="project" value="UniProtKB"/>
</dbReference>
<dbReference type="GO" id="GO:0032092">
    <property type="term" value="P:positive regulation of protein binding"/>
    <property type="evidence" value="ECO:0000315"/>
    <property type="project" value="UniProtKB"/>
</dbReference>
<dbReference type="GO" id="GO:1902966">
    <property type="term" value="P:positive regulation of protein localization to early endosome"/>
    <property type="evidence" value="ECO:0000315"/>
    <property type="project" value="UniProtKB"/>
</dbReference>
<dbReference type="GO" id="GO:1900182">
    <property type="term" value="P:positive regulation of protein localization to nucleus"/>
    <property type="evidence" value="ECO:0000316"/>
    <property type="project" value="UniProtKB"/>
</dbReference>
<dbReference type="GO" id="GO:2000646">
    <property type="term" value="P:positive regulation of receptor catabolic process"/>
    <property type="evidence" value="ECO:0000315"/>
    <property type="project" value="UniProtKB"/>
</dbReference>
<dbReference type="GO" id="GO:0051865">
    <property type="term" value="P:protein autoubiquitination"/>
    <property type="evidence" value="ECO:0000315"/>
    <property type="project" value="UniProtKB"/>
</dbReference>
<dbReference type="GO" id="GO:0070936">
    <property type="term" value="P:protein K48-linked ubiquitination"/>
    <property type="evidence" value="ECO:0000314"/>
    <property type="project" value="UniProtKB"/>
</dbReference>
<dbReference type="GO" id="GO:0015031">
    <property type="term" value="P:protein transport"/>
    <property type="evidence" value="ECO:0007669"/>
    <property type="project" value="UniProtKB-KW"/>
</dbReference>
<dbReference type="GO" id="GO:0016567">
    <property type="term" value="P:protein ubiquitination"/>
    <property type="evidence" value="ECO:0000318"/>
    <property type="project" value="GO_Central"/>
</dbReference>
<dbReference type="GO" id="GO:0006511">
    <property type="term" value="P:ubiquitin-dependent protein catabolic process"/>
    <property type="evidence" value="ECO:0000315"/>
    <property type="project" value="UniProtKB"/>
</dbReference>
<dbReference type="CDD" id="cd09633">
    <property type="entry name" value="Deltex_C"/>
    <property type="match status" value="1"/>
</dbReference>
<dbReference type="CDD" id="cd16712">
    <property type="entry name" value="RING-HC_DTX3L"/>
    <property type="match status" value="1"/>
</dbReference>
<dbReference type="CDD" id="cd12300">
    <property type="entry name" value="RRM1_PAR14"/>
    <property type="match status" value="1"/>
</dbReference>
<dbReference type="FunFam" id="3.30.40.10:FF:000857">
    <property type="entry name" value="E3 ubiquitin-protein ligase DTX3L"/>
    <property type="match status" value="1"/>
</dbReference>
<dbReference type="FunFam" id="3.30.390.130:FF:000001">
    <property type="entry name" value="Probable E3 ubiquitin-protein ligase DTX3"/>
    <property type="match status" value="1"/>
</dbReference>
<dbReference type="Gene3D" id="3.30.390.130">
    <property type="match status" value="1"/>
</dbReference>
<dbReference type="Gene3D" id="3.30.70.330">
    <property type="match status" value="1"/>
</dbReference>
<dbReference type="Gene3D" id="3.30.40.10">
    <property type="entry name" value="Zinc/RING finger domain, C3HC4 (zinc finger)"/>
    <property type="match status" value="1"/>
</dbReference>
<dbReference type="InterPro" id="IPR039396">
    <property type="entry name" value="Deltex_C"/>
</dbReference>
<dbReference type="InterPro" id="IPR039399">
    <property type="entry name" value="Deltex_C_sf"/>
</dbReference>
<dbReference type="InterPro" id="IPR039398">
    <property type="entry name" value="Deltex_fam"/>
</dbReference>
<dbReference type="InterPro" id="IPR048418">
    <property type="entry name" value="DTX3L_a/b_dom"/>
</dbReference>
<dbReference type="InterPro" id="IPR048409">
    <property type="entry name" value="DTX3L_KH-like"/>
</dbReference>
<dbReference type="InterPro" id="IPR012677">
    <property type="entry name" value="Nucleotide-bd_a/b_plait_sf"/>
</dbReference>
<dbReference type="InterPro" id="IPR057051">
    <property type="entry name" value="PARP14_RPM_1"/>
</dbReference>
<dbReference type="InterPro" id="IPR042843">
    <property type="entry name" value="TX3L_RING-HC"/>
</dbReference>
<dbReference type="InterPro" id="IPR001841">
    <property type="entry name" value="Znf_RING"/>
</dbReference>
<dbReference type="InterPro" id="IPR013083">
    <property type="entry name" value="Znf_RING/FYVE/PHD"/>
</dbReference>
<dbReference type="InterPro" id="IPR017907">
    <property type="entry name" value="Znf_RING_CS"/>
</dbReference>
<dbReference type="PANTHER" id="PTHR12622">
    <property type="entry name" value="DELTEX-RELATED"/>
    <property type="match status" value="1"/>
</dbReference>
<dbReference type="Pfam" id="PF18102">
    <property type="entry name" value="DTC"/>
    <property type="match status" value="1"/>
</dbReference>
<dbReference type="Pfam" id="PF21717">
    <property type="entry name" value="DTX3L_a-b"/>
    <property type="match status" value="1"/>
</dbReference>
<dbReference type="Pfam" id="PF21718">
    <property type="entry name" value="KH_DTX3L"/>
    <property type="match status" value="2"/>
</dbReference>
<dbReference type="Pfam" id="PF23222">
    <property type="entry name" value="RRM_PARP14_1"/>
    <property type="match status" value="1"/>
</dbReference>
<dbReference type="Pfam" id="PF13923">
    <property type="entry name" value="zf-C3HC4_2"/>
    <property type="match status" value="1"/>
</dbReference>
<dbReference type="SMART" id="SM00184">
    <property type="entry name" value="RING"/>
    <property type="match status" value="1"/>
</dbReference>
<dbReference type="SUPFAM" id="SSF57850">
    <property type="entry name" value="RING/U-box"/>
    <property type="match status" value="1"/>
</dbReference>
<dbReference type="PROSITE" id="PS00518">
    <property type="entry name" value="ZF_RING_1"/>
    <property type="match status" value="1"/>
</dbReference>
<dbReference type="PROSITE" id="PS50089">
    <property type="entry name" value="ZF_RING_2"/>
    <property type="match status" value="1"/>
</dbReference>
<gene>
    <name type="primary">DTX3L</name>
    <name type="synonym">BBAP</name>
</gene>
<evidence type="ECO:0000255" key="1">
    <source>
        <dbReference type="PROSITE-ProRule" id="PRU00175"/>
    </source>
</evidence>
<evidence type="ECO:0000256" key="2">
    <source>
        <dbReference type="SAM" id="MobiDB-lite"/>
    </source>
</evidence>
<evidence type="ECO:0000269" key="3">
    <source>
    </source>
</evidence>
<evidence type="ECO:0000269" key="4">
    <source>
    </source>
</evidence>
<evidence type="ECO:0000269" key="5">
    <source>
    </source>
</evidence>
<evidence type="ECO:0000269" key="6">
    <source>
    </source>
</evidence>
<evidence type="ECO:0000269" key="7">
    <source>
    </source>
</evidence>
<evidence type="ECO:0000269" key="8">
    <source>
    </source>
</evidence>
<evidence type="ECO:0000269" key="9">
    <source>
    </source>
</evidence>
<evidence type="ECO:0000269" key="10">
    <source>
    </source>
</evidence>
<evidence type="ECO:0000269" key="11">
    <source>
    </source>
</evidence>
<evidence type="ECO:0000269" key="12">
    <source ref="5"/>
</evidence>
<evidence type="ECO:0000303" key="13">
    <source ref="4"/>
</evidence>
<evidence type="ECO:0000305" key="14"/>
<evidence type="ECO:0000305" key="15">
    <source>
    </source>
</evidence>
<evidence type="ECO:0007744" key="16">
    <source>
    </source>
</evidence>
<evidence type="ECO:0007744" key="17">
    <source>
    </source>
</evidence>
<evidence type="ECO:0007744" key="18">
    <source>
    </source>
</evidence>
<evidence type="ECO:0007744" key="19">
    <source>
    </source>
</evidence>
<evidence type="ECO:0007744" key="20">
    <source>
    </source>
</evidence>
<evidence type="ECO:0007744" key="21">
    <source>
    </source>
</evidence>
<evidence type="ECO:0007829" key="22">
    <source>
        <dbReference type="PDB" id="3PG6"/>
    </source>
</evidence>
<evidence type="ECO:0007829" key="23">
    <source>
        <dbReference type="PDB" id="8R79"/>
    </source>
</evidence>
<keyword id="KW-0002">3D-structure</keyword>
<keyword id="KW-0007">Acetylation</keyword>
<keyword id="KW-0025">Alternative splicing</keyword>
<keyword id="KW-0051">Antiviral defense</keyword>
<keyword id="KW-0156">Chromatin regulator</keyword>
<keyword id="KW-0963">Cytoplasm</keyword>
<keyword id="KW-0227">DNA damage</keyword>
<keyword id="KW-0234">DNA repair</keyword>
<keyword id="KW-0967">Endosome</keyword>
<keyword id="KW-0945">Host-virus interaction</keyword>
<keyword id="KW-0391">Immunity</keyword>
<keyword id="KW-0399">Innate immunity</keyword>
<keyword id="KW-0458">Lysosome</keyword>
<keyword id="KW-0472">Membrane</keyword>
<keyword id="KW-0479">Metal-binding</keyword>
<keyword id="KW-0539">Nucleus</keyword>
<keyword id="KW-0597">Phosphoprotein</keyword>
<keyword id="KW-0653">Protein transport</keyword>
<keyword id="KW-1267">Proteomics identification</keyword>
<keyword id="KW-1185">Reference proteome</keyword>
<keyword id="KW-0808">Transferase</keyword>
<keyword id="KW-0813">Transport</keyword>
<keyword id="KW-0832">Ubl conjugation</keyword>
<keyword id="KW-0833">Ubl conjugation pathway</keyword>
<keyword id="KW-0862">Zinc</keyword>
<keyword id="KW-0863">Zinc-finger</keyword>
<feature type="initiator methionine" description="Removed" evidence="18">
    <location>
        <position position="1"/>
    </location>
</feature>
<feature type="chain" id="PRO_0000219087" description="E3 ubiquitin-protein ligase DTX3L">
    <location>
        <begin position="2"/>
        <end position="740"/>
    </location>
</feature>
<feature type="zinc finger region" description="RING-type" evidence="1">
    <location>
        <begin position="561"/>
        <end position="600"/>
    </location>
</feature>
<feature type="region of interest" description="Disordered" evidence="2">
    <location>
        <begin position="96"/>
        <end position="119"/>
    </location>
</feature>
<feature type="region of interest" description="Disordered" evidence="2">
    <location>
        <begin position="195"/>
        <end position="231"/>
    </location>
</feature>
<feature type="region of interest" description="Disordered" evidence="2">
    <location>
        <begin position="524"/>
        <end position="551"/>
    </location>
</feature>
<feature type="compositionally biased region" description="Polar residues" evidence="2">
    <location>
        <begin position="98"/>
        <end position="111"/>
    </location>
</feature>
<feature type="compositionally biased region" description="Polar residues" evidence="2">
    <location>
        <begin position="195"/>
        <end position="205"/>
    </location>
</feature>
<feature type="compositionally biased region" description="Basic and acidic residues" evidence="2">
    <location>
        <begin position="206"/>
        <end position="218"/>
    </location>
</feature>
<feature type="modified residue" description="N-acetylalanine" evidence="18">
    <location>
        <position position="2"/>
    </location>
</feature>
<feature type="modified residue" description="Phosphoserine" evidence="17 18 20">
    <location>
        <position position="9"/>
    </location>
</feature>
<feature type="modified residue" description="Phosphoserine" evidence="19 20">
    <location>
        <position position="202"/>
    </location>
</feature>
<feature type="modified residue" description="Phosphoserine" evidence="16">
    <location>
        <position position="221"/>
    </location>
</feature>
<feature type="modified residue" description="Phosphoserine" evidence="19 20 21">
    <location>
        <position position="532"/>
    </location>
</feature>
<feature type="modified residue" description="Phosphoserine" evidence="21">
    <location>
        <position position="539"/>
    </location>
</feature>
<feature type="splice variant" id="VSP_038522" description="In isoform 2." evidence="13">
    <location>
        <begin position="134"/>
        <end position="645"/>
    </location>
</feature>
<feature type="sequence variant" id="VAR_036098" description="In a breast cancer sample; somatic mutation." evidence="6">
    <original>K</original>
    <variation>N</variation>
    <location>
        <position position="209"/>
    </location>
</feature>
<feature type="sequence variant" id="VAR_048895" description="In dbSNP:rs2332285." evidence="4 12">
    <original>R</original>
    <variation>K</variation>
    <location>
        <position position="425"/>
    </location>
</feature>
<feature type="sequence variant" id="VAR_048896" description="In dbSNP:rs9868175.">
    <original>K</original>
    <variation>M</variation>
    <location>
        <position position="668"/>
    </location>
</feature>
<feature type="mutagenesis site" description="Loss of catalytic activity. Loss of histone H2B ubiquitination. No effect on STAT1 phosphorylation and on the interaction with PARP9 and STAT1." evidence="10">
    <original>CVIC</original>
    <variation>SVIS</variation>
    <location>
        <begin position="561"/>
        <end position="564"/>
    </location>
</feature>
<feature type="mutagenesis site" description="Loss of catalytic activity but does not affect its capacity to inhibit ITCH catalytic activity; when associated with A-596 and A-599." evidence="9">
    <original>C</original>
    <variation>A</variation>
    <location>
        <position position="561"/>
    </location>
</feature>
<feature type="mutagenesis site" description="Loss of catalytic activity but does not affect its capacity to inhibit ITCH catalytic activity; when associated with A-561 and A-599." evidence="9">
    <original>C</original>
    <variation>A</variation>
    <location>
        <position position="596"/>
    </location>
</feature>
<feature type="mutagenesis site" description="Loss of catalytic activity but does not affect its capacity to inhibit ITCH catalytic activity; when associated with A-561 and A-596." evidence="9">
    <original>C</original>
    <variation>A</variation>
    <location>
        <position position="599"/>
    </location>
</feature>
<feature type="sequence conflict" description="In Ref. 4; AAV98362." evidence="14" ref="4">
    <original>I</original>
    <variation>T</variation>
    <location>
        <position position="701"/>
    </location>
</feature>
<feature type="strand" evidence="23">
    <location>
        <begin position="134"/>
        <end position="142"/>
    </location>
</feature>
<feature type="turn" evidence="23">
    <location>
        <begin position="144"/>
        <end position="146"/>
    </location>
</feature>
<feature type="helix" evidence="23">
    <location>
        <begin position="149"/>
        <end position="153"/>
    </location>
</feature>
<feature type="helix" evidence="23">
    <location>
        <begin position="155"/>
        <end position="158"/>
    </location>
</feature>
<feature type="strand" evidence="23">
    <location>
        <begin position="163"/>
        <end position="167"/>
    </location>
</feature>
<feature type="strand" evidence="23">
    <location>
        <begin position="170"/>
        <end position="176"/>
    </location>
</feature>
<feature type="helix" evidence="23">
    <location>
        <begin position="178"/>
        <end position="190"/>
    </location>
</feature>
<feature type="strand" evidence="22">
    <location>
        <begin position="612"/>
        <end position="622"/>
    </location>
</feature>
<feature type="strand" evidence="22">
    <location>
        <begin position="630"/>
        <end position="639"/>
    </location>
</feature>
<feature type="strand" evidence="22">
    <location>
        <begin position="648"/>
        <end position="650"/>
    </location>
</feature>
<feature type="strand" evidence="22">
    <location>
        <begin position="658"/>
        <end position="667"/>
    </location>
</feature>
<feature type="helix" evidence="22">
    <location>
        <begin position="668"/>
        <end position="682"/>
    </location>
</feature>
<feature type="strand" evidence="22">
    <location>
        <begin position="686"/>
        <end position="692"/>
    </location>
</feature>
<feature type="turn" evidence="22">
    <location>
        <begin position="693"/>
        <end position="696"/>
    </location>
</feature>
<feature type="strand" evidence="22">
    <location>
        <begin position="697"/>
        <end position="703"/>
    </location>
</feature>
<feature type="strand" evidence="22">
    <location>
        <begin position="712"/>
        <end position="714"/>
    </location>
</feature>
<feature type="helix" evidence="22">
    <location>
        <begin position="716"/>
        <end position="718"/>
    </location>
</feature>
<feature type="helix" evidence="22">
    <location>
        <begin position="726"/>
        <end position="736"/>
    </location>
</feature>
<reference key="1">
    <citation type="journal article" date="2003" name="J. Biol. Chem.">
        <title>The BAL-binding protein BBAP and related Deltex family members exhibit ubiquitin-protein isopeptide ligase activity.</title>
        <authorList>
            <person name="Takeyama K."/>
            <person name="Aguiar R.C.T."/>
            <person name="Gu L."/>
            <person name="He C."/>
            <person name="Freeman G.J."/>
            <person name="Kutok J.L."/>
            <person name="Aster J.C."/>
            <person name="Shipp M.A."/>
        </authorList>
    </citation>
    <scope>NUCLEOTIDE SEQUENCE [MRNA] (ISOFORM 1)</scope>
    <scope>FUNCTION</scope>
    <scope>CATALYTIC ACTIVITY</scope>
    <scope>PATHWAY</scope>
    <scope>SUBUNIT</scope>
    <scope>INTERACTION WITH PARP9 AND DTX1</scope>
</reference>
<reference key="2">
    <citation type="submission" date="2002-02" db="EMBL/GenBank/DDBJ databases">
        <title>Rhysin2 is a novel protein identified by mass spectrometry found in a myosin VI-containing complex isolated by immunoprecipitation.</title>
        <authorList>
            <person name="Roberts R.C."/>
            <person name="Kendrick-Jones J."/>
            <person name="Jensen O.N."/>
        </authorList>
    </citation>
    <scope>NUCLEOTIDE SEQUENCE [MRNA] (ISOFORM 1)</scope>
</reference>
<reference key="3">
    <citation type="journal article" date="2004" name="Nat. Genet.">
        <title>Complete sequencing and characterization of 21,243 full-length human cDNAs.</title>
        <authorList>
            <person name="Ota T."/>
            <person name="Suzuki Y."/>
            <person name="Nishikawa T."/>
            <person name="Otsuki T."/>
            <person name="Sugiyama T."/>
            <person name="Irie R."/>
            <person name="Wakamatsu A."/>
            <person name="Hayashi K."/>
            <person name="Sato H."/>
            <person name="Nagai K."/>
            <person name="Kimura K."/>
            <person name="Makita H."/>
            <person name="Sekine M."/>
            <person name="Obayashi M."/>
            <person name="Nishi T."/>
            <person name="Shibahara T."/>
            <person name="Tanaka T."/>
            <person name="Ishii S."/>
            <person name="Yamamoto J."/>
            <person name="Saito K."/>
            <person name="Kawai Y."/>
            <person name="Isono Y."/>
            <person name="Nakamura Y."/>
            <person name="Nagahari K."/>
            <person name="Murakami K."/>
            <person name="Yasuda T."/>
            <person name="Iwayanagi T."/>
            <person name="Wagatsuma M."/>
            <person name="Shiratori A."/>
            <person name="Sudo H."/>
            <person name="Hosoiri T."/>
            <person name="Kaku Y."/>
            <person name="Kodaira H."/>
            <person name="Kondo H."/>
            <person name="Sugawara M."/>
            <person name="Takahashi M."/>
            <person name="Kanda K."/>
            <person name="Yokoi T."/>
            <person name="Furuya T."/>
            <person name="Kikkawa E."/>
            <person name="Omura Y."/>
            <person name="Abe K."/>
            <person name="Kamihara K."/>
            <person name="Katsuta N."/>
            <person name="Sato K."/>
            <person name="Tanikawa M."/>
            <person name="Yamazaki M."/>
            <person name="Ninomiya K."/>
            <person name="Ishibashi T."/>
            <person name="Yamashita H."/>
            <person name="Murakawa K."/>
            <person name="Fujimori K."/>
            <person name="Tanai H."/>
            <person name="Kimata M."/>
            <person name="Watanabe M."/>
            <person name="Hiraoka S."/>
            <person name="Chiba Y."/>
            <person name="Ishida S."/>
            <person name="Ono Y."/>
            <person name="Takiguchi S."/>
            <person name="Watanabe S."/>
            <person name="Yosida M."/>
            <person name="Hotuta T."/>
            <person name="Kusano J."/>
            <person name="Kanehori K."/>
            <person name="Takahashi-Fujii A."/>
            <person name="Hara H."/>
            <person name="Tanase T.-O."/>
            <person name="Nomura Y."/>
            <person name="Togiya S."/>
            <person name="Komai F."/>
            <person name="Hara R."/>
            <person name="Takeuchi K."/>
            <person name="Arita M."/>
            <person name="Imose N."/>
            <person name="Musashino K."/>
            <person name="Yuuki H."/>
            <person name="Oshima A."/>
            <person name="Sasaki N."/>
            <person name="Aotsuka S."/>
            <person name="Yoshikawa Y."/>
            <person name="Matsunawa H."/>
            <person name="Ichihara T."/>
            <person name="Shiohata N."/>
            <person name="Sano S."/>
            <person name="Moriya S."/>
            <person name="Momiyama H."/>
            <person name="Satoh N."/>
            <person name="Takami S."/>
            <person name="Terashima Y."/>
            <person name="Suzuki O."/>
            <person name="Nakagawa S."/>
            <person name="Senoh A."/>
            <person name="Mizoguchi H."/>
            <person name="Goto Y."/>
            <person name="Shimizu F."/>
            <person name="Wakebe H."/>
            <person name="Hishigaki H."/>
            <person name="Watanabe T."/>
            <person name="Sugiyama A."/>
            <person name="Takemoto M."/>
            <person name="Kawakami B."/>
            <person name="Yamazaki M."/>
            <person name="Watanabe K."/>
            <person name="Kumagai A."/>
            <person name="Itakura S."/>
            <person name="Fukuzumi Y."/>
            <person name="Fujimori Y."/>
            <person name="Komiyama M."/>
            <person name="Tashiro H."/>
            <person name="Tanigami A."/>
            <person name="Fujiwara T."/>
            <person name="Ono T."/>
            <person name="Yamada K."/>
            <person name="Fujii Y."/>
            <person name="Ozaki K."/>
            <person name="Hirao M."/>
            <person name="Ohmori Y."/>
            <person name="Kawabata A."/>
            <person name="Hikiji T."/>
            <person name="Kobatake N."/>
            <person name="Inagaki H."/>
            <person name="Ikema Y."/>
            <person name="Okamoto S."/>
            <person name="Okitani R."/>
            <person name="Kawakami T."/>
            <person name="Noguchi S."/>
            <person name="Itoh T."/>
            <person name="Shigeta K."/>
            <person name="Senba T."/>
            <person name="Matsumura K."/>
            <person name="Nakajima Y."/>
            <person name="Mizuno T."/>
            <person name="Morinaga M."/>
            <person name="Sasaki M."/>
            <person name="Togashi T."/>
            <person name="Oyama M."/>
            <person name="Hata H."/>
            <person name="Watanabe M."/>
            <person name="Komatsu T."/>
            <person name="Mizushima-Sugano J."/>
            <person name="Satoh T."/>
            <person name="Shirai Y."/>
            <person name="Takahashi Y."/>
            <person name="Nakagawa K."/>
            <person name="Okumura K."/>
            <person name="Nagase T."/>
            <person name="Nomura N."/>
            <person name="Kikuchi H."/>
            <person name="Masuho Y."/>
            <person name="Yamashita R."/>
            <person name="Nakai K."/>
            <person name="Yada T."/>
            <person name="Nakamura Y."/>
            <person name="Ohara O."/>
            <person name="Isogai T."/>
            <person name="Sugano S."/>
        </authorList>
    </citation>
    <scope>NUCLEOTIDE SEQUENCE [LARGE SCALE MRNA] (ISOFORM 1)</scope>
    <scope>VARIANT LYS-425</scope>
    <source>
        <tissue>Tongue</tissue>
    </source>
</reference>
<reference key="4">
    <citation type="submission" date="2004-10" db="EMBL/GenBank/DDBJ databases">
        <authorList>
            <person name="Lin L."/>
            <person name="Nong W."/>
            <person name="Li H."/>
            <person name="Ke R."/>
            <person name="Zhong G."/>
            <person name="Zhou G."/>
            <person name="Shen C."/>
            <person name="Yang S."/>
        </authorList>
    </citation>
    <scope>NUCLEOTIDE SEQUENCE [LARGE SCALE MRNA] (ISOFORM 2)</scope>
</reference>
<reference key="5">
    <citation type="submission" date="2005-09" db="EMBL/GenBank/DDBJ databases">
        <authorList>
            <person name="Mural R.J."/>
            <person name="Istrail S."/>
            <person name="Sutton G.G."/>
            <person name="Florea L."/>
            <person name="Halpern A.L."/>
            <person name="Mobarry C.M."/>
            <person name="Lippert R."/>
            <person name="Walenz B."/>
            <person name="Shatkay H."/>
            <person name="Dew I."/>
            <person name="Miller J.R."/>
            <person name="Flanigan M.J."/>
            <person name="Edwards N.J."/>
            <person name="Bolanos R."/>
            <person name="Fasulo D."/>
            <person name="Halldorsson B.V."/>
            <person name="Hannenhalli S."/>
            <person name="Turner R."/>
            <person name="Yooseph S."/>
            <person name="Lu F."/>
            <person name="Nusskern D.R."/>
            <person name="Shue B.C."/>
            <person name="Zheng X.H."/>
            <person name="Zhong F."/>
            <person name="Delcher A.L."/>
            <person name="Huson D.H."/>
            <person name="Kravitz S.A."/>
            <person name="Mouchard L."/>
            <person name="Reinert K."/>
            <person name="Remington K.A."/>
            <person name="Clark A.G."/>
            <person name="Waterman M.S."/>
            <person name="Eichler E.E."/>
            <person name="Adams M.D."/>
            <person name="Hunkapiller M.W."/>
            <person name="Myers E.W."/>
            <person name="Venter J.C."/>
        </authorList>
    </citation>
    <scope>NUCLEOTIDE SEQUENCE [LARGE SCALE GENOMIC DNA]</scope>
    <scope>VARIANT LYS-425</scope>
</reference>
<reference key="6">
    <citation type="journal article" date="2004" name="Genome Res.">
        <title>The status, quality, and expansion of the NIH full-length cDNA project: the Mammalian Gene Collection (MGC).</title>
        <authorList>
            <consortium name="The MGC Project Team"/>
        </authorList>
    </citation>
    <scope>NUCLEOTIDE SEQUENCE [LARGE SCALE MRNA] (ISOFORM 1)</scope>
    <source>
        <tissue>Lymph</tissue>
    </source>
</reference>
<reference key="7">
    <citation type="journal article" date="2006" name="Mol. Cell. Biol.">
        <title>BAL1 and BBAP are regulated by a gamma interferon-responsive bidirectional promoter and are overexpressed in diffuse large B-cell lymphomas with a prominent inflammatory infiltrate.</title>
        <authorList>
            <person name="Juszczynski P."/>
            <person name="Kutok J.L."/>
            <person name="Li C."/>
            <person name="Mitra J."/>
            <person name="Aguiar R.C.T."/>
            <person name="Shipp M.A."/>
        </authorList>
    </citation>
    <scope>SUBCELLULAR LOCATION</scope>
    <scope>INDUCTION BY IFNG</scope>
</reference>
<reference key="8">
    <citation type="journal article" date="2006" name="Nat. Biotechnol.">
        <title>A probability-based approach for high-throughput protein phosphorylation analysis and site localization.</title>
        <authorList>
            <person name="Beausoleil S.A."/>
            <person name="Villen J."/>
            <person name="Gerber S.A."/>
            <person name="Rush J."/>
            <person name="Gygi S.P."/>
        </authorList>
    </citation>
    <scope>IDENTIFICATION BY MASS SPECTROMETRY [LARGE SCALE ANALYSIS]</scope>
    <source>
        <tissue>Cervix carcinoma</tissue>
    </source>
</reference>
<reference key="9">
    <citation type="journal article" date="2008" name="Mol. Cell">
        <title>Kinase-selective enrichment enables quantitative phosphoproteomics of the kinome across the cell cycle.</title>
        <authorList>
            <person name="Daub H."/>
            <person name="Olsen J.V."/>
            <person name="Bairlein M."/>
            <person name="Gnad F."/>
            <person name="Oppermann F.S."/>
            <person name="Korner R."/>
            <person name="Greff Z."/>
            <person name="Keri G."/>
            <person name="Stemmann O."/>
            <person name="Mann M."/>
        </authorList>
    </citation>
    <scope>PHOSPHORYLATION [LARGE SCALE ANALYSIS] AT SER-9</scope>
    <scope>IDENTIFICATION BY MASS SPECTROMETRY [LARGE SCALE ANALYSIS]</scope>
    <source>
        <tissue>Cervix carcinoma</tissue>
    </source>
</reference>
<reference key="10">
    <citation type="journal article" date="2008" name="Proc. Natl. Acad. Sci. U.S.A.">
        <title>A quantitative atlas of mitotic phosphorylation.</title>
        <authorList>
            <person name="Dephoure N."/>
            <person name="Zhou C."/>
            <person name="Villen J."/>
            <person name="Beausoleil S.A."/>
            <person name="Bakalarski C.E."/>
            <person name="Elledge S.J."/>
            <person name="Gygi S.P."/>
        </authorList>
    </citation>
    <scope>PHOSPHORYLATION [LARGE SCALE ANALYSIS] AT SER-221</scope>
    <scope>IDENTIFICATION BY MASS SPECTROMETRY [LARGE SCALE ANALYSIS]</scope>
    <source>
        <tissue>Cervix carcinoma</tissue>
    </source>
</reference>
<reference key="11">
    <citation type="journal article" date="2009" name="Mol. Cell">
        <title>BBAP monoubiquitylates histone H4 at lysine 91 and selectively modulates the DNA damage response.</title>
        <authorList>
            <person name="Yan Q."/>
            <person name="Dutt S."/>
            <person name="Xu R."/>
            <person name="Graves K."/>
            <person name="Juszczynski P."/>
            <person name="Manis J.P."/>
            <person name="Shipp M.A."/>
        </authorList>
    </citation>
    <scope>FUNCTION AS AN E3 UBIQUITIN-PROTEIN LIGASE</scope>
    <scope>CATALYTIC ACTIVITY</scope>
    <scope>PATHWAY</scope>
</reference>
<reference key="12">
    <citation type="journal article" date="2009" name="Mol. Cell. Proteomics">
        <title>Large-scale proteomics analysis of the human kinome.</title>
        <authorList>
            <person name="Oppermann F.S."/>
            <person name="Gnad F."/>
            <person name="Olsen J.V."/>
            <person name="Hornberger R."/>
            <person name="Greff Z."/>
            <person name="Keri G."/>
            <person name="Mann M."/>
            <person name="Daub H."/>
        </authorList>
    </citation>
    <scope>ACETYLATION [LARGE SCALE ANALYSIS] AT ALA-2</scope>
    <scope>PHOSPHORYLATION [LARGE SCALE ANALYSIS] AT SER-9</scope>
    <scope>CLEAVAGE OF INITIATOR METHIONINE [LARGE SCALE ANALYSIS]</scope>
    <scope>IDENTIFICATION BY MASS SPECTROMETRY [LARGE SCALE ANALYSIS]</scope>
</reference>
<reference key="13">
    <citation type="journal article" date="2010" name="Sci. Signal.">
        <title>Quantitative phosphoproteomics reveals widespread full phosphorylation site occupancy during mitosis.</title>
        <authorList>
            <person name="Olsen J.V."/>
            <person name="Vermeulen M."/>
            <person name="Santamaria A."/>
            <person name="Kumar C."/>
            <person name="Miller M.L."/>
            <person name="Jensen L.J."/>
            <person name="Gnad F."/>
            <person name="Cox J."/>
            <person name="Jensen T.S."/>
            <person name="Nigg E.A."/>
            <person name="Brunak S."/>
            <person name="Mann M."/>
        </authorList>
    </citation>
    <scope>PHOSPHORYLATION [LARGE SCALE ANALYSIS] AT SER-202 AND SER-532</scope>
    <scope>IDENTIFICATION BY MASS SPECTROMETRY [LARGE SCALE ANALYSIS]</scope>
    <source>
        <tissue>Cervix carcinoma</tissue>
    </source>
</reference>
<reference key="14">
    <citation type="journal article" date="2013" name="J. Proteome Res.">
        <title>Toward a comprehensive characterization of a human cancer cell phosphoproteome.</title>
        <authorList>
            <person name="Zhou H."/>
            <person name="Di Palma S."/>
            <person name="Preisinger C."/>
            <person name="Peng M."/>
            <person name="Polat A.N."/>
            <person name="Heck A.J."/>
            <person name="Mohammed S."/>
        </authorList>
    </citation>
    <scope>PHOSPHORYLATION [LARGE SCALE ANALYSIS] AT SER-9; SER-202 AND SER-532</scope>
    <scope>IDENTIFICATION BY MASS SPECTROMETRY [LARGE SCALE ANALYSIS]</scope>
    <source>
        <tissue>Cervix carcinoma</tissue>
        <tissue>Erythroleukemia</tissue>
    </source>
</reference>
<reference key="15">
    <citation type="journal article" date="2013" name="Mol. Cell. Biol.">
        <title>BAL1 and its partner E3 ligase, BBAP, link Poly(ADP-ribose) activation, ubiquitylation, and double-strand DNA repair independent of ATM, MDC1, and RNF8.</title>
        <authorList>
            <person name="Yan Q."/>
            <person name="Xu R."/>
            <person name="Zhu L."/>
            <person name="Cheng X."/>
            <person name="Wang Z."/>
            <person name="Manis J."/>
            <person name="Shipp M.A."/>
        </authorList>
    </citation>
    <scope>FUNCTION</scope>
    <scope>SUBCELLULAR LOCATION</scope>
    <scope>INTERACTION WITH PARP9</scope>
</reference>
<reference key="16">
    <citation type="journal article" date="2014" name="J. Proteomics">
        <title>An enzyme assisted RP-RPLC approach for in-depth analysis of human liver phosphoproteome.</title>
        <authorList>
            <person name="Bian Y."/>
            <person name="Song C."/>
            <person name="Cheng K."/>
            <person name="Dong M."/>
            <person name="Wang F."/>
            <person name="Huang J."/>
            <person name="Sun D."/>
            <person name="Wang L."/>
            <person name="Ye M."/>
            <person name="Zou H."/>
        </authorList>
    </citation>
    <scope>PHOSPHORYLATION [LARGE SCALE ANALYSIS] AT SER-532 AND SER-539</scope>
    <scope>IDENTIFICATION BY MASS SPECTROMETRY [LARGE SCALE ANALYSIS]</scope>
    <source>
        <tissue>Liver</tissue>
    </source>
</reference>
<reference key="17">
    <citation type="journal article" date="2014" name="Mol. Biol. Cell">
        <title>The ubiquitin ligase deltex-3l regulates endosomal sorting of the G protein-coupled receptor CXCR4.</title>
        <authorList>
            <person name="Holleman J."/>
            <person name="Marchese A."/>
        </authorList>
    </citation>
    <scope>FUNCTION</scope>
    <scope>CATALYTIC ACTIVITY</scope>
    <scope>PATHWAY</scope>
    <scope>INTERACTION WITH ITCH</scope>
    <scope>IDENTIFICATION IN A COMPLEX WITH ITCH; STAM AND HGS</scope>
    <scope>SUBCELLULAR LOCATION</scope>
    <scope>UBIQUITINATION</scope>
    <scope>MUTAGENESIS OF CYS-561; CYS-596 AND CYS-599</scope>
</reference>
<reference key="18">
    <citation type="journal article" date="2015" name="Nat. Immunol.">
        <title>PARP9-DTX3L ubiquitin ligase targets host histone H2BJ and viral 3C protease to enhance interferon signaling and control viral infection.</title>
        <authorList>
            <person name="Zhang Y."/>
            <person name="Mao D."/>
            <person name="Roswit W.T."/>
            <person name="Jin X."/>
            <person name="Patel A.C."/>
            <person name="Patel D.A."/>
            <person name="Agapov E."/>
            <person name="Wang Z."/>
            <person name="Tidwell R.M."/>
            <person name="Atkinson J.J."/>
            <person name="Huang G."/>
            <person name="McCarthy R."/>
            <person name="Yu J."/>
            <person name="Yun N.E."/>
            <person name="Paessler S."/>
            <person name="Lawson T.G."/>
            <person name="Omattage N.S."/>
            <person name="Brett T.J."/>
            <person name="Holtzman M.J."/>
        </authorList>
    </citation>
    <scope>FUNCTION</scope>
    <scope>CATALYTIC ACTIVITY</scope>
    <scope>PATHWAY</scope>
    <scope>INTERACTION WITH PARP9 AND STAT1</scope>
    <scope>INTERACTION WITH HRV C3 PROTEASE AND EMCV C3 PROTEASE (MICROBIAL INFECTION)</scope>
    <scope>IDENTIFICATION IN A COMPLEX WITH PARP9; STAT1 AND H2BC9</scope>
    <scope>SUBCELLULAR LOCATION</scope>
    <scope>INDUCTION</scope>
    <scope>MUTAGENESIS OF 561-CYS--CYS-564</scope>
</reference>
<reference key="19">
    <citation type="journal article" date="2017" name="Mol. Cell">
        <title>Ubiquitin Modification by the E3 Ligase/ADP-Ribosyltransferase Dtx3L/Parp9.</title>
        <authorList>
            <person name="Yang C.S."/>
            <person name="Jividen K."/>
            <person name="Spencer A."/>
            <person name="Dworak N."/>
            <person name="Ni L."/>
            <person name="Oostdyk L.T."/>
            <person name="Chatterjee M."/>
            <person name="Kusmider B."/>
            <person name="Reon B."/>
            <person name="Parlak M."/>
            <person name="Gorbunova V."/>
            <person name="Abbas T."/>
            <person name="Jeffery E."/>
            <person name="Sherman N.E."/>
            <person name="Paschal B.M."/>
        </authorList>
    </citation>
    <scope>FUNCTION</scope>
    <scope>CATALYTIC ACTIVITY</scope>
    <scope>PATHWAY</scope>
    <scope>ACTIVITY REGULATION</scope>
    <scope>IDENTIFICATION IN A COMPLEX WITH PARP9</scope>
</reference>
<reference key="20">
    <citation type="journal article" date="2012" name="Proteins">
        <title>Fold of the conserved DTC domain in deltex proteins.</title>
        <authorList>
            <person name="Obiero J."/>
            <person name="Walker J.R."/>
            <person name="Dhe-Paganon S."/>
        </authorList>
    </citation>
    <scope>X-RAY CRYSTALLOGRAPHY (1.7 ANGSTROMS) OF 601-740</scope>
</reference>
<reference key="21">
    <citation type="journal article" date="2006" name="Science">
        <title>The consensus coding sequences of human breast and colorectal cancers.</title>
        <authorList>
            <person name="Sjoeblom T."/>
            <person name="Jones S."/>
            <person name="Wood L.D."/>
            <person name="Parsons D.W."/>
            <person name="Lin J."/>
            <person name="Barber T.D."/>
            <person name="Mandelker D."/>
            <person name="Leary R.J."/>
            <person name="Ptak J."/>
            <person name="Silliman N."/>
            <person name="Szabo S."/>
            <person name="Buckhaults P."/>
            <person name="Farrell C."/>
            <person name="Meeh P."/>
            <person name="Markowitz S.D."/>
            <person name="Willis J."/>
            <person name="Dawson D."/>
            <person name="Willson J.K.V."/>
            <person name="Gazdar A.F."/>
            <person name="Hartigan J."/>
            <person name="Wu L."/>
            <person name="Liu C."/>
            <person name="Parmigiani G."/>
            <person name="Park B.H."/>
            <person name="Bachman K.E."/>
            <person name="Papadopoulos N."/>
            <person name="Vogelstein B."/>
            <person name="Kinzler K.W."/>
            <person name="Velculescu V.E."/>
        </authorList>
    </citation>
    <scope>VARIANT [LARGE SCALE ANALYSIS] ASN-209</scope>
</reference>
<proteinExistence type="evidence at protein level"/>
<protein>
    <recommendedName>
        <fullName>E3 ubiquitin-protein ligase DTX3L</fullName>
        <ecNumber evidence="3 7 9 10 11">2.3.2.27</ecNumber>
    </recommendedName>
    <alternativeName>
        <fullName>B-lymphoma- and BAL-associated protein</fullName>
    </alternativeName>
    <alternativeName>
        <fullName>Protein deltex-3-like</fullName>
    </alternativeName>
    <alternativeName>
        <fullName evidence="14">RING-type E3 ubiquitin transferase DTX3L</fullName>
    </alternativeName>
    <alternativeName>
        <fullName>Rhysin-2</fullName>
        <shortName>Rhysin2</shortName>
    </alternativeName>
</protein>
<name>DTX3L_HUMAN</name>
<sequence length="740" mass="83554">MASHLRPPSPLLVRVYKSGPRVRRKLESYFQSSKSSGGGECTVSTQEHEAPGTFRVEFSERAAKERVLKKGEHQILVDEKPVPIFLVPTENSIKKNTRPQISSLTQSQAETPSGDMHQHEGHIPNAVDSCLQKIFLTVTADLNCNLFSKEQRAYITTLCPSIRKMEGHDGIEKVCGDFQDIERIHQFLSEQFLESEQKQQFSPSMTERKPLSQQERDSCISPSEPETKAEQKSNYFEVPLPYFEYFKYICPDKINSIEKRFGVNIEIQESSPNMVCLDFTSSRSGDLEAARESFASEFQKNTEPLKQECVSLADSKQANKFKQELNHQFTKLLIKEKGGELTLLGTQDDISAAKQKISEAFVKIPVKLFAANYMMNVIEVDSAHYKLLETELLQEISEIEKRYDICSKVSEKGQKTCILFESKDRQVDLSVHAYASFIDAFQHASCQLMREVLLLKSLGKERKHLHQTKFADDFRKRHPNVHFVLNQESMTLTGLPNHLAKAKQYVLKGGGMSSLAGKKLKEGHETPMDIDSDDSKAASPPLKGSVSSEASELDKKEKGICVICMDTISNKKVLPKCKHEFCAPCINKAMSYKPICPTCQTSYGIQKGNQPEGSMVFTVSRDSLPGYESFGTIVITYSMKAGIQTEEHPNPGKRYPGIQRTAYLPDNKEGRKVLKLLYRAFDQKLIFTVGYSRVLGVSDVITWNDIHHKTSRFGGPEMYGYPDPSYLKRVKEELKAKGIE</sequence>
<accession>Q8TDB6</accession>
<accession>B3KWH6</accession>
<accession>Q53ZZ3</accession>
<accession>Q5MJP7</accession>